<name>LPXK_RHIEC</name>
<accession>Q2KBX9</accession>
<evidence type="ECO:0000255" key="1">
    <source>
        <dbReference type="HAMAP-Rule" id="MF_00409"/>
    </source>
</evidence>
<sequence>MISEAPPFWWRKADWRAWLLAPLSFLYGRIAGHRMAHARRASVSVPVICVGNFTVGGAGKTPTALTLARAAKAKGLKPGFLSRGYGGSLDVTTVVDPLHHRAVAVGDEPLLLAQEALTVISRRRLDGARRLVAEGADLIIMDDGFQSARLAIDYALLVIDATRGLGNGHIVPAGPVRAPIRQQLRSATALLKVGGGNAADGIVRMAARAAKPYFTASLKVRGDDRLSGIKVLAFAGIADPAKFFRTVESRGAEIAVAKTFGDHEHLTEEEIDDILTTAERQDLLIVTTSKDFVRLSGHHGKAEQLAQKARVIEVDIVFEDHLAPGLIIDRAIIACRDRRLKELKTS</sequence>
<keyword id="KW-0067">ATP-binding</keyword>
<keyword id="KW-0418">Kinase</keyword>
<keyword id="KW-0441">Lipid A biosynthesis</keyword>
<keyword id="KW-0444">Lipid biosynthesis</keyword>
<keyword id="KW-0443">Lipid metabolism</keyword>
<keyword id="KW-0547">Nucleotide-binding</keyword>
<keyword id="KW-1185">Reference proteome</keyword>
<keyword id="KW-0808">Transferase</keyword>
<protein>
    <recommendedName>
        <fullName evidence="1">Tetraacyldisaccharide 4'-kinase</fullName>
        <ecNumber evidence="1">2.7.1.130</ecNumber>
    </recommendedName>
    <alternativeName>
        <fullName evidence="1">Lipid A 4'-kinase</fullName>
    </alternativeName>
</protein>
<proteinExistence type="inferred from homology"/>
<comment type="function">
    <text evidence="1">Transfers the gamma-phosphate of ATP to the 4'-position of a tetraacyldisaccharide 1-phosphate intermediate (termed DS-1-P) to form tetraacyldisaccharide 1,4'-bis-phosphate (lipid IVA).</text>
</comment>
<comment type="catalytic activity">
    <reaction evidence="1">
        <text>a lipid A disaccharide + ATP = a lipid IVA + ADP + H(+)</text>
        <dbReference type="Rhea" id="RHEA:67840"/>
        <dbReference type="ChEBI" id="CHEBI:15378"/>
        <dbReference type="ChEBI" id="CHEBI:30616"/>
        <dbReference type="ChEBI" id="CHEBI:176343"/>
        <dbReference type="ChEBI" id="CHEBI:176425"/>
        <dbReference type="ChEBI" id="CHEBI:456216"/>
        <dbReference type="EC" id="2.7.1.130"/>
    </reaction>
</comment>
<comment type="pathway">
    <text evidence="1">Glycolipid biosynthesis; lipid IV(A) biosynthesis; lipid IV(A) from (3R)-3-hydroxytetradecanoyl-[acyl-carrier-protein] and UDP-N-acetyl-alpha-D-glucosamine: step 6/6.</text>
</comment>
<comment type="similarity">
    <text evidence="1">Belongs to the LpxK family.</text>
</comment>
<reference key="1">
    <citation type="journal article" date="2006" name="Proc. Natl. Acad. Sci. U.S.A.">
        <title>The partitioned Rhizobium etli genome: genetic and metabolic redundancy in seven interacting replicons.</title>
        <authorList>
            <person name="Gonzalez V."/>
            <person name="Santamaria R.I."/>
            <person name="Bustos P."/>
            <person name="Hernandez-Gonzalez I."/>
            <person name="Medrano-Soto A."/>
            <person name="Moreno-Hagelsieb G."/>
            <person name="Janga S.C."/>
            <person name="Ramirez M.A."/>
            <person name="Jimenez-Jacinto V."/>
            <person name="Collado-Vides J."/>
            <person name="Davila G."/>
        </authorList>
    </citation>
    <scope>NUCLEOTIDE SEQUENCE [LARGE SCALE GENOMIC DNA]</scope>
    <source>
        <strain>ATCC 51251 / DSM 11541 / JCM 21823 / NBRC 15573 / CFN 42</strain>
    </source>
</reference>
<gene>
    <name evidence="1" type="primary">lpxK</name>
    <name type="ordered locus">RHE_CH00846</name>
</gene>
<organism>
    <name type="scientific">Rhizobium etli (strain ATCC 51251 / DSM 11541 / JCM 21823 / NBRC 15573 / CFN 42)</name>
    <dbReference type="NCBI Taxonomy" id="347834"/>
    <lineage>
        <taxon>Bacteria</taxon>
        <taxon>Pseudomonadati</taxon>
        <taxon>Pseudomonadota</taxon>
        <taxon>Alphaproteobacteria</taxon>
        <taxon>Hyphomicrobiales</taxon>
        <taxon>Rhizobiaceae</taxon>
        <taxon>Rhizobium/Agrobacterium group</taxon>
        <taxon>Rhizobium</taxon>
    </lineage>
</organism>
<feature type="chain" id="PRO_0000291231" description="Tetraacyldisaccharide 4'-kinase">
    <location>
        <begin position="1"/>
        <end position="346"/>
    </location>
</feature>
<feature type="binding site" evidence="1">
    <location>
        <begin position="54"/>
        <end position="61"/>
    </location>
    <ligand>
        <name>ATP</name>
        <dbReference type="ChEBI" id="CHEBI:30616"/>
    </ligand>
</feature>
<dbReference type="EC" id="2.7.1.130" evidence="1"/>
<dbReference type="EMBL" id="CP000133">
    <property type="protein sequence ID" value="ABC89657.1"/>
    <property type="molecule type" value="Genomic_DNA"/>
</dbReference>
<dbReference type="RefSeq" id="WP_011424195.1">
    <property type="nucleotide sequence ID" value="NC_007761.1"/>
</dbReference>
<dbReference type="SMR" id="Q2KBX9"/>
<dbReference type="KEGG" id="ret:RHE_CH00846"/>
<dbReference type="eggNOG" id="COG1663">
    <property type="taxonomic scope" value="Bacteria"/>
</dbReference>
<dbReference type="HOGENOM" id="CLU_038816_0_0_5"/>
<dbReference type="OrthoDB" id="9766423at2"/>
<dbReference type="UniPathway" id="UPA00359">
    <property type="reaction ID" value="UER00482"/>
</dbReference>
<dbReference type="Proteomes" id="UP000001936">
    <property type="component" value="Chromosome"/>
</dbReference>
<dbReference type="GO" id="GO:0005886">
    <property type="term" value="C:plasma membrane"/>
    <property type="evidence" value="ECO:0007669"/>
    <property type="project" value="TreeGrafter"/>
</dbReference>
<dbReference type="GO" id="GO:0005524">
    <property type="term" value="F:ATP binding"/>
    <property type="evidence" value="ECO:0007669"/>
    <property type="project" value="UniProtKB-UniRule"/>
</dbReference>
<dbReference type="GO" id="GO:0009029">
    <property type="term" value="F:tetraacyldisaccharide 4'-kinase activity"/>
    <property type="evidence" value="ECO:0007669"/>
    <property type="project" value="UniProtKB-UniRule"/>
</dbReference>
<dbReference type="GO" id="GO:0009245">
    <property type="term" value="P:lipid A biosynthetic process"/>
    <property type="evidence" value="ECO:0007669"/>
    <property type="project" value="UniProtKB-UniRule"/>
</dbReference>
<dbReference type="GO" id="GO:0009244">
    <property type="term" value="P:lipopolysaccharide core region biosynthetic process"/>
    <property type="evidence" value="ECO:0007669"/>
    <property type="project" value="TreeGrafter"/>
</dbReference>
<dbReference type="HAMAP" id="MF_00409">
    <property type="entry name" value="LpxK"/>
    <property type="match status" value="1"/>
</dbReference>
<dbReference type="InterPro" id="IPR003758">
    <property type="entry name" value="LpxK"/>
</dbReference>
<dbReference type="InterPro" id="IPR027417">
    <property type="entry name" value="P-loop_NTPase"/>
</dbReference>
<dbReference type="NCBIfam" id="TIGR00682">
    <property type="entry name" value="lpxK"/>
    <property type="match status" value="1"/>
</dbReference>
<dbReference type="PANTHER" id="PTHR42724">
    <property type="entry name" value="TETRAACYLDISACCHARIDE 4'-KINASE"/>
    <property type="match status" value="1"/>
</dbReference>
<dbReference type="PANTHER" id="PTHR42724:SF1">
    <property type="entry name" value="TETRAACYLDISACCHARIDE 4'-KINASE, MITOCHONDRIAL-RELATED"/>
    <property type="match status" value="1"/>
</dbReference>
<dbReference type="Pfam" id="PF02606">
    <property type="entry name" value="LpxK"/>
    <property type="match status" value="1"/>
</dbReference>
<dbReference type="SUPFAM" id="SSF52540">
    <property type="entry name" value="P-loop containing nucleoside triphosphate hydrolases"/>
    <property type="match status" value="1"/>
</dbReference>